<protein>
    <recommendedName>
        <fullName>Putative uncharacterized protein YKL031W</fullName>
    </recommendedName>
</protein>
<dbReference type="EMBL" id="X71622">
    <property type="status" value="NOT_ANNOTATED_CDS"/>
    <property type="molecule type" value="Genomic_DNA"/>
</dbReference>
<dbReference type="EMBL" id="Z28031">
    <property type="protein sequence ID" value="CAA81866.1"/>
    <property type="molecule type" value="Genomic_DNA"/>
</dbReference>
<dbReference type="EMBL" id="AY558543">
    <property type="protein sequence ID" value="AAS56869.1"/>
    <property type="molecule type" value="Genomic_DNA"/>
</dbReference>
<dbReference type="PIR" id="S37848">
    <property type="entry name" value="S37848"/>
</dbReference>
<dbReference type="STRING" id="4932.YKL031W"/>
<dbReference type="PaxDb" id="4932-YKL031W"/>
<dbReference type="EnsemblFungi" id="YKL031W_mRNA">
    <property type="protein sequence ID" value="YKL031W"/>
    <property type="gene ID" value="YKL031W"/>
</dbReference>
<dbReference type="AGR" id="SGD:S000001514"/>
<dbReference type="SGD" id="S000001514">
    <property type="gene designation" value="YKL031W"/>
</dbReference>
<dbReference type="HOGENOM" id="CLU_1866286_0_0_1"/>
<dbReference type="GO" id="GO:0016020">
    <property type="term" value="C:membrane"/>
    <property type="evidence" value="ECO:0007669"/>
    <property type="project" value="UniProtKB-SubCell"/>
</dbReference>
<accession>P36098</accession>
<sequence>MQYDYGTEDNEVNHIYSENERQKERENECAGPCLYLAPPADVCIFFLFPFVLSPRGGGKEKKKKKVRKVRCASPLLLLHPDITPNTKPRAAVVSNRSTHSSTVCRSLSTMCMFYGYVPIFSAFGIIFCFDNYRSCYC</sequence>
<gene>
    <name type="ordered locus">YKL031W</name>
    <name type="ORF">YKL244</name>
</gene>
<organism>
    <name type="scientific">Saccharomyces cerevisiae (strain ATCC 204508 / S288c)</name>
    <name type="common">Baker's yeast</name>
    <dbReference type="NCBI Taxonomy" id="559292"/>
    <lineage>
        <taxon>Eukaryota</taxon>
        <taxon>Fungi</taxon>
        <taxon>Dikarya</taxon>
        <taxon>Ascomycota</taxon>
        <taxon>Saccharomycotina</taxon>
        <taxon>Saccharomycetes</taxon>
        <taxon>Saccharomycetales</taxon>
        <taxon>Saccharomycetaceae</taxon>
        <taxon>Saccharomyces</taxon>
    </lineage>
</organism>
<name>YKD1_YEAST</name>
<proteinExistence type="uncertain"/>
<feature type="chain" id="PRO_0000203187" description="Putative uncharacterized protein YKL031W">
    <location>
        <begin position="1"/>
        <end position="137"/>
    </location>
</feature>
<feature type="transmembrane region" description="Helical" evidence="1">
    <location>
        <begin position="36"/>
        <end position="52"/>
    </location>
</feature>
<feature type="transmembrane region" description="Helical" evidence="1">
    <location>
        <begin position="113"/>
        <end position="129"/>
    </location>
</feature>
<evidence type="ECO:0000255" key="1"/>
<evidence type="ECO:0000305" key="2"/>
<evidence type="ECO:0000305" key="3">
    <source>
    </source>
</evidence>
<comment type="subcellular location">
    <subcellularLocation>
        <location evidence="2">Membrane</location>
        <topology evidence="2">Multi-pass membrane protein</topology>
    </subcellularLocation>
</comment>
<comment type="caution">
    <text evidence="3">Product of a dubious gene prediction unlikely to encode a functional protein. Because of that it is not part of the S.cerevisiae S288c complete/reference proteome set.</text>
</comment>
<keyword id="KW-0472">Membrane</keyword>
<keyword id="KW-0812">Transmembrane</keyword>
<keyword id="KW-1133">Transmembrane helix</keyword>
<reference key="1">
    <citation type="journal article" date="1994" name="Yeast">
        <title>Analysis of an 11.7 kb DNA fragment of chromosome XI reveals a new tRNA gene and four new open reading frames including a leucine zipper protein and a homologue to the yeast mitochondrial regulator ABF2.</title>
        <authorList>
            <person name="Purnelle B."/>
            <person name="Skala J."/>
            <person name="van Dyck L."/>
            <person name="Goffeau A."/>
        </authorList>
    </citation>
    <scope>NUCLEOTIDE SEQUENCE [GENOMIC DNA]</scope>
    <source>
        <strain>ATCC 204508 / S288c</strain>
    </source>
</reference>
<reference key="2">
    <citation type="journal article" date="1994" name="Nature">
        <title>Complete DNA sequence of yeast chromosome XI.</title>
        <authorList>
            <person name="Dujon B."/>
            <person name="Alexandraki D."/>
            <person name="Andre B."/>
            <person name="Ansorge W."/>
            <person name="Baladron V."/>
            <person name="Ballesta J.P.G."/>
            <person name="Banrevi A."/>
            <person name="Bolle P.-A."/>
            <person name="Bolotin-Fukuhara M."/>
            <person name="Bossier P."/>
            <person name="Bou G."/>
            <person name="Boyer J."/>
            <person name="Buitrago M.J."/>
            <person name="Cheret G."/>
            <person name="Colleaux L."/>
            <person name="Daignan-Fornier B."/>
            <person name="del Rey F."/>
            <person name="Dion C."/>
            <person name="Domdey H."/>
            <person name="Duesterhoeft A."/>
            <person name="Duesterhus S."/>
            <person name="Entian K.-D."/>
            <person name="Erfle H."/>
            <person name="Esteban P.F."/>
            <person name="Feldmann H."/>
            <person name="Fernandes L."/>
            <person name="Fobo G.M."/>
            <person name="Fritz C."/>
            <person name="Fukuhara H."/>
            <person name="Gabel C."/>
            <person name="Gaillon L."/>
            <person name="Garcia-Cantalejo J.M."/>
            <person name="Garcia-Ramirez J.J."/>
            <person name="Gent M.E."/>
            <person name="Ghazvini M."/>
            <person name="Goffeau A."/>
            <person name="Gonzalez A."/>
            <person name="Grothues D."/>
            <person name="Guerreiro P."/>
            <person name="Hegemann J.H."/>
            <person name="Hewitt N."/>
            <person name="Hilger F."/>
            <person name="Hollenberg C.P."/>
            <person name="Horaitis O."/>
            <person name="Indge K.J."/>
            <person name="Jacquier A."/>
            <person name="James C.M."/>
            <person name="Jauniaux J.-C."/>
            <person name="Jimenez A."/>
            <person name="Keuchel H."/>
            <person name="Kirchrath L."/>
            <person name="Kleine K."/>
            <person name="Koetter P."/>
            <person name="Legrain P."/>
            <person name="Liebl S."/>
            <person name="Louis E.J."/>
            <person name="Maia e Silva A."/>
            <person name="Marck C."/>
            <person name="Monnier A.-L."/>
            <person name="Moestl D."/>
            <person name="Mueller S."/>
            <person name="Obermaier B."/>
            <person name="Oliver S.G."/>
            <person name="Pallier C."/>
            <person name="Pascolo S."/>
            <person name="Pfeiffer F."/>
            <person name="Philippsen P."/>
            <person name="Planta R.J."/>
            <person name="Pohl F.M."/>
            <person name="Pohl T.M."/>
            <person name="Poehlmann R."/>
            <person name="Portetelle D."/>
            <person name="Purnelle B."/>
            <person name="Puzos V."/>
            <person name="Ramezani Rad M."/>
            <person name="Rasmussen S.W."/>
            <person name="Remacha M.A."/>
            <person name="Revuelta J.L."/>
            <person name="Richard G.-F."/>
            <person name="Rieger M."/>
            <person name="Rodrigues-Pousada C."/>
            <person name="Rose M."/>
            <person name="Rupp T."/>
            <person name="Santos M.A."/>
            <person name="Schwager C."/>
            <person name="Sensen C."/>
            <person name="Skala J."/>
            <person name="Soares H."/>
            <person name="Sor F."/>
            <person name="Stegemann J."/>
            <person name="Tettelin H."/>
            <person name="Thierry A."/>
            <person name="Tzermia M."/>
            <person name="Urrestarazu L.A."/>
            <person name="van Dyck L."/>
            <person name="van Vliet-Reedijk J.C."/>
            <person name="Valens M."/>
            <person name="Vandenbol M."/>
            <person name="Vilela C."/>
            <person name="Vissers S."/>
            <person name="von Wettstein D."/>
            <person name="Voss H."/>
            <person name="Wiemann S."/>
            <person name="Xu G."/>
            <person name="Zimmermann J."/>
            <person name="Haasemann M."/>
            <person name="Becker I."/>
            <person name="Mewes H.-W."/>
        </authorList>
    </citation>
    <scope>NUCLEOTIDE SEQUENCE [LARGE SCALE GENOMIC DNA]</scope>
    <source>
        <strain>ATCC 204508 / S288c</strain>
    </source>
</reference>
<reference key="3">
    <citation type="journal article" date="2014" name="G3 (Bethesda)">
        <title>The reference genome sequence of Saccharomyces cerevisiae: Then and now.</title>
        <authorList>
            <person name="Engel S.R."/>
            <person name="Dietrich F.S."/>
            <person name="Fisk D.G."/>
            <person name="Binkley G."/>
            <person name="Balakrishnan R."/>
            <person name="Costanzo M.C."/>
            <person name="Dwight S.S."/>
            <person name="Hitz B.C."/>
            <person name="Karra K."/>
            <person name="Nash R.S."/>
            <person name="Weng S."/>
            <person name="Wong E.D."/>
            <person name="Lloyd P."/>
            <person name="Skrzypek M.S."/>
            <person name="Miyasato S.R."/>
            <person name="Simison M."/>
            <person name="Cherry J.M."/>
        </authorList>
    </citation>
    <scope>GENOME REANNOTATION</scope>
    <source>
        <strain>ATCC 204508 / S288c</strain>
    </source>
</reference>
<reference key="4">
    <citation type="journal article" date="2007" name="Genome Res.">
        <title>Approaching a complete repository of sequence-verified protein-encoding clones for Saccharomyces cerevisiae.</title>
        <authorList>
            <person name="Hu Y."/>
            <person name="Rolfs A."/>
            <person name="Bhullar B."/>
            <person name="Murthy T.V.S."/>
            <person name="Zhu C."/>
            <person name="Berger M.F."/>
            <person name="Camargo A.A."/>
            <person name="Kelley F."/>
            <person name="McCarron S."/>
            <person name="Jepson D."/>
            <person name="Richardson A."/>
            <person name="Raphael J."/>
            <person name="Moreira D."/>
            <person name="Taycher E."/>
            <person name="Zuo D."/>
            <person name="Mohr S."/>
            <person name="Kane M.F."/>
            <person name="Williamson J."/>
            <person name="Simpson A.J.G."/>
            <person name="Bulyk M.L."/>
            <person name="Harlow E."/>
            <person name="Marsischky G."/>
            <person name="Kolodner R.D."/>
            <person name="LaBaer J."/>
        </authorList>
    </citation>
    <scope>NUCLEOTIDE SEQUENCE [GENOMIC DNA]</scope>
    <source>
        <strain>ATCC 204508 / S288c</strain>
    </source>
</reference>